<dbReference type="EMBL" id="CU329671">
    <property type="protein sequence ID" value="CAD27908.1"/>
    <property type="molecule type" value="Genomic_DNA"/>
</dbReference>
<dbReference type="RefSeq" id="NP_001018763.1">
    <property type="nucleotide sequence ID" value="NM_001020938.2"/>
</dbReference>
<dbReference type="SMR" id="Q8TFG0"/>
<dbReference type="FunCoup" id="Q8TFG0">
    <property type="interactions" value="66"/>
</dbReference>
<dbReference type="STRING" id="284812.Q8TFG0"/>
<dbReference type="PaxDb" id="4896-SPBPB8B6.02c.1"/>
<dbReference type="EnsemblFungi" id="SPBPB8B6.02c.1">
    <property type="protein sequence ID" value="SPBPB8B6.02c.1:pep"/>
    <property type="gene ID" value="SPBPB8B6.02c"/>
</dbReference>
<dbReference type="KEGG" id="spo:3361185"/>
<dbReference type="PomBase" id="SPBPB8B6.02c"/>
<dbReference type="VEuPathDB" id="FungiDB:SPBPB8B6.02c"/>
<dbReference type="eggNOG" id="KOG2348">
    <property type="taxonomic scope" value="Eukaryota"/>
</dbReference>
<dbReference type="HOGENOM" id="CLU_010778_2_1_1"/>
<dbReference type="InParanoid" id="Q8TFG0"/>
<dbReference type="OMA" id="AWTWPAT"/>
<dbReference type="PhylomeDB" id="Q8TFG0"/>
<dbReference type="PRO" id="PR:Q8TFG0"/>
<dbReference type="Proteomes" id="UP000002485">
    <property type="component" value="Chromosome II"/>
</dbReference>
<dbReference type="GO" id="GO:0005783">
    <property type="term" value="C:endoplasmic reticulum"/>
    <property type="evidence" value="ECO:0007005"/>
    <property type="project" value="PomBase"/>
</dbReference>
<dbReference type="GO" id="GO:0005789">
    <property type="term" value="C:endoplasmic reticulum membrane"/>
    <property type="evidence" value="ECO:0007669"/>
    <property type="project" value="UniProtKB-SubCell"/>
</dbReference>
<dbReference type="GO" id="GO:0005886">
    <property type="term" value="C:plasma membrane"/>
    <property type="evidence" value="ECO:0000318"/>
    <property type="project" value="GO_Central"/>
</dbReference>
<dbReference type="GO" id="GO:0015489">
    <property type="term" value="F:putrescine transmembrane transporter activity"/>
    <property type="evidence" value="ECO:0000318"/>
    <property type="project" value="GO_Central"/>
</dbReference>
<dbReference type="GO" id="GO:0015606">
    <property type="term" value="F:spermidine transmembrane transporter activity"/>
    <property type="evidence" value="ECO:0000318"/>
    <property type="project" value="GO_Central"/>
</dbReference>
<dbReference type="GO" id="GO:0015204">
    <property type="term" value="F:urea transmembrane transporter activity"/>
    <property type="evidence" value="ECO:0000318"/>
    <property type="project" value="GO_Central"/>
</dbReference>
<dbReference type="GO" id="GO:0015847">
    <property type="term" value="P:putrescine transport"/>
    <property type="evidence" value="ECO:0000318"/>
    <property type="project" value="GO_Central"/>
</dbReference>
<dbReference type="GO" id="GO:0015848">
    <property type="term" value="P:spermidine transport"/>
    <property type="evidence" value="ECO:0000318"/>
    <property type="project" value="GO_Central"/>
</dbReference>
<dbReference type="GO" id="GO:0071918">
    <property type="term" value="P:urea transmembrane transport"/>
    <property type="evidence" value="ECO:0000266"/>
    <property type="project" value="PomBase"/>
</dbReference>
<dbReference type="GO" id="GO:0015840">
    <property type="term" value="P:urea transport"/>
    <property type="evidence" value="ECO:0000318"/>
    <property type="project" value="GO_Central"/>
</dbReference>
<dbReference type="CDD" id="cd11476">
    <property type="entry name" value="SLC5sbd_DUR3"/>
    <property type="match status" value="1"/>
</dbReference>
<dbReference type="Gene3D" id="1.20.1730.10">
    <property type="entry name" value="Sodium/glucose cotransporter"/>
    <property type="match status" value="1"/>
</dbReference>
<dbReference type="InterPro" id="IPR031155">
    <property type="entry name" value="DUR"/>
</dbReference>
<dbReference type="InterPro" id="IPR038377">
    <property type="entry name" value="Na/Glc_symporter_sf"/>
</dbReference>
<dbReference type="InterPro" id="IPR001734">
    <property type="entry name" value="Na/solute_symporter"/>
</dbReference>
<dbReference type="PANTHER" id="PTHR46154">
    <property type="match status" value="1"/>
</dbReference>
<dbReference type="PANTHER" id="PTHR46154:SF4">
    <property type="entry name" value="UREA ACTIVE TRANSPORTER"/>
    <property type="match status" value="1"/>
</dbReference>
<dbReference type="Pfam" id="PF00474">
    <property type="entry name" value="SSF"/>
    <property type="match status" value="1"/>
</dbReference>
<dbReference type="PROSITE" id="PS50283">
    <property type="entry name" value="NA_SOLUT_SYMP_3"/>
    <property type="match status" value="1"/>
</dbReference>
<keyword id="KW-0256">Endoplasmic reticulum</keyword>
<keyword id="KW-0472">Membrane</keyword>
<keyword id="KW-1185">Reference proteome</keyword>
<keyword id="KW-0812">Transmembrane</keyword>
<keyword id="KW-1133">Transmembrane helix</keyword>
<keyword id="KW-0813">Transport</keyword>
<reference key="1">
    <citation type="journal article" date="2002" name="Nature">
        <title>The genome sequence of Schizosaccharomyces pombe.</title>
        <authorList>
            <person name="Wood V."/>
            <person name="Gwilliam R."/>
            <person name="Rajandream M.A."/>
            <person name="Lyne M.H."/>
            <person name="Lyne R."/>
            <person name="Stewart A."/>
            <person name="Sgouros J.G."/>
            <person name="Peat N."/>
            <person name="Hayles J."/>
            <person name="Baker S.G."/>
            <person name="Basham D."/>
            <person name="Bowman S."/>
            <person name="Brooks K."/>
            <person name="Brown D."/>
            <person name="Brown S."/>
            <person name="Chillingworth T."/>
            <person name="Churcher C.M."/>
            <person name="Collins M."/>
            <person name="Connor R."/>
            <person name="Cronin A."/>
            <person name="Davis P."/>
            <person name="Feltwell T."/>
            <person name="Fraser A."/>
            <person name="Gentles S."/>
            <person name="Goble A."/>
            <person name="Hamlin N."/>
            <person name="Harris D.E."/>
            <person name="Hidalgo J."/>
            <person name="Hodgson G."/>
            <person name="Holroyd S."/>
            <person name="Hornsby T."/>
            <person name="Howarth S."/>
            <person name="Huckle E.J."/>
            <person name="Hunt S."/>
            <person name="Jagels K."/>
            <person name="James K.D."/>
            <person name="Jones L."/>
            <person name="Jones M."/>
            <person name="Leather S."/>
            <person name="McDonald S."/>
            <person name="McLean J."/>
            <person name="Mooney P."/>
            <person name="Moule S."/>
            <person name="Mungall K.L."/>
            <person name="Murphy L.D."/>
            <person name="Niblett D."/>
            <person name="Odell C."/>
            <person name="Oliver K."/>
            <person name="O'Neil S."/>
            <person name="Pearson D."/>
            <person name="Quail M.A."/>
            <person name="Rabbinowitsch E."/>
            <person name="Rutherford K.M."/>
            <person name="Rutter S."/>
            <person name="Saunders D."/>
            <person name="Seeger K."/>
            <person name="Sharp S."/>
            <person name="Skelton J."/>
            <person name="Simmonds M.N."/>
            <person name="Squares R."/>
            <person name="Squares S."/>
            <person name="Stevens K."/>
            <person name="Taylor K."/>
            <person name="Taylor R.G."/>
            <person name="Tivey A."/>
            <person name="Walsh S.V."/>
            <person name="Warren T."/>
            <person name="Whitehead S."/>
            <person name="Woodward J.R."/>
            <person name="Volckaert G."/>
            <person name="Aert R."/>
            <person name="Robben J."/>
            <person name="Grymonprez B."/>
            <person name="Weltjens I."/>
            <person name="Vanstreels E."/>
            <person name="Rieger M."/>
            <person name="Schaefer M."/>
            <person name="Mueller-Auer S."/>
            <person name="Gabel C."/>
            <person name="Fuchs M."/>
            <person name="Duesterhoeft A."/>
            <person name="Fritzc C."/>
            <person name="Holzer E."/>
            <person name="Moestl D."/>
            <person name="Hilbert H."/>
            <person name="Borzym K."/>
            <person name="Langer I."/>
            <person name="Beck A."/>
            <person name="Lehrach H."/>
            <person name="Reinhardt R."/>
            <person name="Pohl T.M."/>
            <person name="Eger P."/>
            <person name="Zimmermann W."/>
            <person name="Wedler H."/>
            <person name="Wambutt R."/>
            <person name="Purnelle B."/>
            <person name="Goffeau A."/>
            <person name="Cadieu E."/>
            <person name="Dreano S."/>
            <person name="Gloux S."/>
            <person name="Lelaure V."/>
            <person name="Mottier S."/>
            <person name="Galibert F."/>
            <person name="Aves S.J."/>
            <person name="Xiang Z."/>
            <person name="Hunt C."/>
            <person name="Moore K."/>
            <person name="Hurst S.M."/>
            <person name="Lucas M."/>
            <person name="Rochet M."/>
            <person name="Gaillardin C."/>
            <person name="Tallada V.A."/>
            <person name="Garzon A."/>
            <person name="Thode G."/>
            <person name="Daga R.R."/>
            <person name="Cruzado L."/>
            <person name="Jimenez J."/>
            <person name="Sanchez M."/>
            <person name="del Rey F."/>
            <person name="Benito J."/>
            <person name="Dominguez A."/>
            <person name="Revuelta J.L."/>
            <person name="Moreno S."/>
            <person name="Armstrong J."/>
            <person name="Forsburg S.L."/>
            <person name="Cerutti L."/>
            <person name="Lowe T."/>
            <person name="McCombie W.R."/>
            <person name="Paulsen I."/>
            <person name="Potashkin J."/>
            <person name="Shpakovski G.V."/>
            <person name="Ussery D."/>
            <person name="Barrell B.G."/>
            <person name="Nurse P."/>
        </authorList>
    </citation>
    <scope>NUCLEOTIDE SEQUENCE [LARGE SCALE GENOMIC DNA]</scope>
    <source>
        <strain>972 / ATCC 24843</strain>
    </source>
</reference>
<organism>
    <name type="scientific">Schizosaccharomyces pombe (strain 972 / ATCC 24843)</name>
    <name type="common">Fission yeast</name>
    <dbReference type="NCBI Taxonomy" id="284812"/>
    <lineage>
        <taxon>Eukaryota</taxon>
        <taxon>Fungi</taxon>
        <taxon>Dikarya</taxon>
        <taxon>Ascomycota</taxon>
        <taxon>Taphrinomycotina</taxon>
        <taxon>Schizosaccharomycetes</taxon>
        <taxon>Schizosaccharomycetales</taxon>
        <taxon>Schizosaccharomycetaceae</taxon>
        <taxon>Schizosaccharomyces</taxon>
    </lineage>
</organism>
<gene>
    <name type="primary">dur3-2</name>
    <name type="ORF">SPAP8B6.02c</name>
    <name type="ORF">SPAPB8B6.02c</name>
    <name type="ORF">SPBPB8B6.02c</name>
</gene>
<feature type="chain" id="PRO_0000314767" description="Probable urea active transporter 2">
    <location>
        <begin position="1"/>
        <end position="673"/>
    </location>
</feature>
<feature type="transmembrane region" description="Helical" evidence="2">
    <location>
        <begin position="8"/>
        <end position="28"/>
    </location>
</feature>
<feature type="transmembrane region" description="Helical" evidence="2">
    <location>
        <begin position="83"/>
        <end position="103"/>
    </location>
</feature>
<feature type="transmembrane region" description="Helical" evidence="2">
    <location>
        <begin position="132"/>
        <end position="152"/>
    </location>
</feature>
<feature type="transmembrane region" description="Helical" evidence="2">
    <location>
        <begin position="164"/>
        <end position="184"/>
    </location>
</feature>
<feature type="transmembrane region" description="Helical" evidence="2">
    <location>
        <begin position="196"/>
        <end position="218"/>
    </location>
</feature>
<feature type="transmembrane region" description="Helical" evidence="2">
    <location>
        <begin position="249"/>
        <end position="269"/>
    </location>
</feature>
<feature type="transmembrane region" description="Helical" evidence="2">
    <location>
        <begin position="287"/>
        <end position="307"/>
    </location>
</feature>
<feature type="transmembrane region" description="Helical" evidence="2">
    <location>
        <begin position="336"/>
        <end position="356"/>
    </location>
</feature>
<feature type="transmembrane region" description="Helical" evidence="2">
    <location>
        <begin position="391"/>
        <end position="411"/>
    </location>
</feature>
<feature type="transmembrane region" description="Helical" evidence="2">
    <location>
        <begin position="424"/>
        <end position="446"/>
    </location>
</feature>
<feature type="transmembrane region" description="Helical" evidence="2">
    <location>
        <begin position="451"/>
        <end position="471"/>
    </location>
</feature>
<feature type="transmembrane region" description="Helical" evidence="2">
    <location>
        <begin position="492"/>
        <end position="512"/>
    </location>
</feature>
<feature type="transmembrane region" description="Helical" evidence="2">
    <location>
        <begin position="559"/>
        <end position="579"/>
    </location>
</feature>
<feature type="transmembrane region" description="Helical" evidence="2">
    <location>
        <begin position="592"/>
        <end position="612"/>
    </location>
</feature>
<comment type="function">
    <text evidence="1">Involved in active transport of urea.</text>
</comment>
<comment type="subcellular location">
    <subcellularLocation>
        <location>Endoplasmic reticulum membrane</location>
        <topology>Multi-pass membrane protein</topology>
    </subcellularLocation>
</comment>
<comment type="similarity">
    <text evidence="3">Belongs to the sodium:solute symporter (SSF) (TC 2.A.21) family.</text>
</comment>
<sequence length="673" mass="72604">MEPILNQGYGYGFALGLGAAFALLMAIITKVLTACMGQTQNSERFSTASRSVKSGLISSSTVSAWTWPATLLSSGAWSYTYGIMGGFMYGVGGTIQITLFLFLAIQIKKKAPAAHTVSECFFIRFGKLGHCVYLFYCISTNVLVSSLLLLGGSQGFSSTTGMNTVAACFLLPLGVMVYTTLGGLKATFISDWIHTVMIYIILIVTCYTVYCSSSLIGSPAKMYDMLKEVQEVYPATGGQSYLSFKNSEMMYLTWSVMIGGLSSVFGDPGYSQRAIASDAKSVFQGYLMGGLCWWIIPMALGSSAGLACRALLLNPASVTYPNVLSSVEISSGLPVIYGMASIFGKSGAAAGLVMLFMSITSATSAELIAFSSVTTYDIFRAYINPAANGKQLVRTAHLSVIGFSLFIGALSVGFNYAGVTAGWLLTFLGIILTPEVSAVTLCLFWNKMTRFSLVVGAPFGTITGVVCWLASTYSFCDGIVNKDTVMTSKACFVGNIVSMASSPLYIVLLSYIWPDKETFDLNQFRNITVGDDIDTTELNAIVSQLKDERILKLQTYWSIGINLFILIGCYVIIPTALLGSNHDLSKSSFSGLIIVCLIWILVAAIYIILFPLWQGRKSLANVISHIIRLKAPENILLDGLTPKQSSEDVGDATSFHMDKLDKEKEKSSELKTA</sequence>
<accession>Q8TFG0</accession>
<protein>
    <recommendedName>
        <fullName>Probable urea active transporter 2</fullName>
    </recommendedName>
</protein>
<name>DUR32_SCHPO</name>
<proteinExistence type="inferred from homology"/>
<evidence type="ECO:0000250" key="1"/>
<evidence type="ECO:0000255" key="2"/>
<evidence type="ECO:0000305" key="3"/>